<name>TPA_PULPI</name>
<reference key="1">
    <citation type="journal article" date="2008" name="Toxicon">
        <title>Characterization of antimicrobial peptides from the skin secretions of the Malaysian frogs, Odorrana hosii and Hylarana picturata (Anura:Ranidae).</title>
        <authorList>
            <person name="Conlon J.M."/>
            <person name="Kolodziejek J."/>
            <person name="Nowotny N."/>
            <person name="Leprince J."/>
            <person name="Vaudry H."/>
            <person name="Coquet L."/>
            <person name="Jouenne T."/>
            <person name="King J.D."/>
        </authorList>
    </citation>
    <scope>PROTEIN SEQUENCE</scope>
    <scope>FUNCTION</scope>
    <scope>AMIDATION AT LEU-13</scope>
    <scope>MASS SPECTROMETRY</scope>
    <source>
        <tissue>Skin secretion</tissue>
    </source>
</reference>
<proteinExistence type="evidence at protein level"/>
<feature type="peptide" id="PRO_0000366050" description="Temporin-PTa">
    <location>
        <begin position="1"/>
        <end position="13"/>
    </location>
</feature>
<feature type="modified residue" description="Leucine amide" evidence="1">
    <location>
        <position position="13"/>
    </location>
</feature>
<dbReference type="PDB" id="8T01">
    <property type="method" value="NMR"/>
    <property type="chains" value="A=1-13"/>
</dbReference>
<dbReference type="PDBsum" id="8T01"/>
<dbReference type="SMR" id="P0C8U2"/>
<dbReference type="GO" id="GO:0005576">
    <property type="term" value="C:extracellular region"/>
    <property type="evidence" value="ECO:0007669"/>
    <property type="project" value="UniProtKB-SubCell"/>
</dbReference>
<dbReference type="GO" id="GO:0042742">
    <property type="term" value="P:defense response to bacterium"/>
    <property type="evidence" value="ECO:0007669"/>
    <property type="project" value="UniProtKB-KW"/>
</dbReference>
<evidence type="ECO:0000269" key="1">
    <source>
    </source>
</evidence>
<evidence type="ECO:0000305" key="2"/>
<sequence>FFGSVLKLIPKIL</sequence>
<organism>
    <name type="scientific">Pulchrana picturata</name>
    <name type="common">Malaysian fire frog</name>
    <name type="synonym">Hylarana picturata</name>
    <dbReference type="NCBI Taxonomy" id="395594"/>
    <lineage>
        <taxon>Eukaryota</taxon>
        <taxon>Metazoa</taxon>
        <taxon>Chordata</taxon>
        <taxon>Craniata</taxon>
        <taxon>Vertebrata</taxon>
        <taxon>Euteleostomi</taxon>
        <taxon>Amphibia</taxon>
        <taxon>Batrachia</taxon>
        <taxon>Anura</taxon>
        <taxon>Neobatrachia</taxon>
        <taxon>Ranoidea</taxon>
        <taxon>Ranidae</taxon>
        <taxon>Pulchrana</taxon>
    </lineage>
</organism>
<accession>P0C8U2</accession>
<comment type="function">
    <text evidence="1">Has antibacterial activity against the Gram-positive bacterium S.aureus ATCC 25923 and the Gram-negative bacterium E.coli ATCC 25726.</text>
</comment>
<comment type="subcellular location">
    <subcellularLocation>
        <location>Secreted</location>
    </subcellularLocation>
</comment>
<comment type="tissue specificity">
    <text>Expressed by the skin glands.</text>
</comment>
<comment type="mass spectrometry"/>
<comment type="similarity">
    <text evidence="2">Belongs to the frog skin active peptide (FSAP) family. Temporin subfamily.</text>
</comment>
<keyword id="KW-0002">3D-structure</keyword>
<keyword id="KW-0027">Amidation</keyword>
<keyword id="KW-0878">Amphibian defense peptide</keyword>
<keyword id="KW-0044">Antibiotic</keyword>
<keyword id="KW-0929">Antimicrobial</keyword>
<keyword id="KW-0903">Direct protein sequencing</keyword>
<keyword id="KW-0964">Secreted</keyword>
<protein>
    <recommendedName>
        <fullName>Temporin-PTa</fullName>
    </recommendedName>
</protein>